<name>RBSA_SALPA</name>
<feature type="chain" id="PRO_0000261099" description="Ribose import ATP-binding protein RbsA">
    <location>
        <begin position="1"/>
        <end position="501"/>
    </location>
</feature>
<feature type="domain" description="ABC transporter 1" evidence="1">
    <location>
        <begin position="5"/>
        <end position="241"/>
    </location>
</feature>
<feature type="domain" description="ABC transporter 2" evidence="1">
    <location>
        <begin position="252"/>
        <end position="495"/>
    </location>
</feature>
<feature type="binding site" evidence="1">
    <location>
        <begin position="37"/>
        <end position="44"/>
    </location>
    <ligand>
        <name>ATP</name>
        <dbReference type="ChEBI" id="CHEBI:30616"/>
    </ligand>
</feature>
<keyword id="KW-0067">ATP-binding</keyword>
<keyword id="KW-0997">Cell inner membrane</keyword>
<keyword id="KW-1003">Cell membrane</keyword>
<keyword id="KW-0472">Membrane</keyword>
<keyword id="KW-0547">Nucleotide-binding</keyword>
<keyword id="KW-0677">Repeat</keyword>
<keyword id="KW-0762">Sugar transport</keyword>
<keyword id="KW-1278">Translocase</keyword>
<keyword id="KW-0813">Transport</keyword>
<evidence type="ECO:0000255" key="1">
    <source>
        <dbReference type="HAMAP-Rule" id="MF_01716"/>
    </source>
</evidence>
<protein>
    <recommendedName>
        <fullName evidence="1">Ribose import ATP-binding protein RbsA</fullName>
        <ecNumber evidence="1">7.5.2.7</ecNumber>
    </recommendedName>
</protein>
<dbReference type="EC" id="7.5.2.7" evidence="1"/>
<dbReference type="EMBL" id="CP000026">
    <property type="protein sequence ID" value="AAV79513.1"/>
    <property type="molecule type" value="Genomic_DNA"/>
</dbReference>
<dbReference type="RefSeq" id="WP_011233211.1">
    <property type="nucleotide sequence ID" value="NC_006511.1"/>
</dbReference>
<dbReference type="SMR" id="Q5PJX5"/>
<dbReference type="KEGG" id="spt:SPA3721"/>
<dbReference type="HOGENOM" id="CLU_000604_92_3_6"/>
<dbReference type="Proteomes" id="UP000008185">
    <property type="component" value="Chromosome"/>
</dbReference>
<dbReference type="GO" id="GO:0005886">
    <property type="term" value="C:plasma membrane"/>
    <property type="evidence" value="ECO:0007669"/>
    <property type="project" value="UniProtKB-SubCell"/>
</dbReference>
<dbReference type="GO" id="GO:0015611">
    <property type="term" value="F:ABC-type D-ribose transporter activity"/>
    <property type="evidence" value="ECO:0007669"/>
    <property type="project" value="UniProtKB-EC"/>
</dbReference>
<dbReference type="GO" id="GO:0005524">
    <property type="term" value="F:ATP binding"/>
    <property type="evidence" value="ECO:0007669"/>
    <property type="project" value="UniProtKB-KW"/>
</dbReference>
<dbReference type="GO" id="GO:0016887">
    <property type="term" value="F:ATP hydrolysis activity"/>
    <property type="evidence" value="ECO:0007669"/>
    <property type="project" value="InterPro"/>
</dbReference>
<dbReference type="CDD" id="cd03216">
    <property type="entry name" value="ABC_Carb_Monos_I"/>
    <property type="match status" value="1"/>
</dbReference>
<dbReference type="CDD" id="cd03215">
    <property type="entry name" value="ABC_Carb_Monos_II"/>
    <property type="match status" value="1"/>
</dbReference>
<dbReference type="FunFam" id="3.40.50.300:FF:000126">
    <property type="entry name" value="Galactose/methyl galactoside import ATP-binding protein MglA"/>
    <property type="match status" value="1"/>
</dbReference>
<dbReference type="FunFam" id="3.40.50.300:FF:000127">
    <property type="entry name" value="Ribose import ATP-binding protein RbsA"/>
    <property type="match status" value="1"/>
</dbReference>
<dbReference type="Gene3D" id="3.40.50.300">
    <property type="entry name" value="P-loop containing nucleotide triphosphate hydrolases"/>
    <property type="match status" value="2"/>
</dbReference>
<dbReference type="InterPro" id="IPR003593">
    <property type="entry name" value="AAA+_ATPase"/>
</dbReference>
<dbReference type="InterPro" id="IPR050107">
    <property type="entry name" value="ABC_carbohydrate_import_ATPase"/>
</dbReference>
<dbReference type="InterPro" id="IPR003439">
    <property type="entry name" value="ABC_transporter-like_ATP-bd"/>
</dbReference>
<dbReference type="InterPro" id="IPR017871">
    <property type="entry name" value="ABC_transporter-like_CS"/>
</dbReference>
<dbReference type="InterPro" id="IPR027417">
    <property type="entry name" value="P-loop_NTPase"/>
</dbReference>
<dbReference type="NCBIfam" id="NF008030">
    <property type="entry name" value="PRK10762.1"/>
    <property type="match status" value="1"/>
</dbReference>
<dbReference type="PANTHER" id="PTHR43790">
    <property type="entry name" value="CARBOHYDRATE TRANSPORT ATP-BINDING PROTEIN MG119-RELATED"/>
    <property type="match status" value="1"/>
</dbReference>
<dbReference type="PANTHER" id="PTHR43790:SF3">
    <property type="entry name" value="D-ALLOSE IMPORT ATP-BINDING PROTEIN ALSA-RELATED"/>
    <property type="match status" value="1"/>
</dbReference>
<dbReference type="Pfam" id="PF00005">
    <property type="entry name" value="ABC_tran"/>
    <property type="match status" value="2"/>
</dbReference>
<dbReference type="SMART" id="SM00382">
    <property type="entry name" value="AAA"/>
    <property type="match status" value="2"/>
</dbReference>
<dbReference type="SUPFAM" id="SSF52540">
    <property type="entry name" value="P-loop containing nucleoside triphosphate hydrolases"/>
    <property type="match status" value="2"/>
</dbReference>
<dbReference type="PROSITE" id="PS00211">
    <property type="entry name" value="ABC_TRANSPORTER_1"/>
    <property type="match status" value="1"/>
</dbReference>
<dbReference type="PROSITE" id="PS50893">
    <property type="entry name" value="ABC_TRANSPORTER_2"/>
    <property type="match status" value="1"/>
</dbReference>
<dbReference type="PROSITE" id="PS51254">
    <property type="entry name" value="RBSA"/>
    <property type="match status" value="1"/>
</dbReference>
<proteinExistence type="inferred from homology"/>
<comment type="function">
    <text evidence="1">Part of the ABC transporter complex RbsABC involved in ribose import. Responsible for energy coupling to the transport system.</text>
</comment>
<comment type="catalytic activity">
    <reaction evidence="1">
        <text>D-ribose(out) + ATP + H2O = D-ribose(in) + ADP + phosphate + H(+)</text>
        <dbReference type="Rhea" id="RHEA:29903"/>
        <dbReference type="ChEBI" id="CHEBI:15377"/>
        <dbReference type="ChEBI" id="CHEBI:15378"/>
        <dbReference type="ChEBI" id="CHEBI:30616"/>
        <dbReference type="ChEBI" id="CHEBI:43474"/>
        <dbReference type="ChEBI" id="CHEBI:47013"/>
        <dbReference type="ChEBI" id="CHEBI:456216"/>
        <dbReference type="EC" id="7.5.2.7"/>
    </reaction>
</comment>
<comment type="subunit">
    <text evidence="1">The complex is composed of an ATP-binding protein (RbsA), two transmembrane proteins (RbsC) and a solute-binding protein (RbsB).</text>
</comment>
<comment type="subcellular location">
    <subcellularLocation>
        <location evidence="1">Cell inner membrane</location>
        <topology evidence="1">Peripheral membrane protein</topology>
    </subcellularLocation>
</comment>
<comment type="similarity">
    <text evidence="1">Belongs to the ABC transporter superfamily. Ribose importer (TC 3.A.1.2.1) family.</text>
</comment>
<sequence length="501" mass="55229">MDALLQLKGIDKAFPGVKALSGAALNVYPGRVMALMGENGAGKSTMMKVLTGIYTRDAGSLLWLGKETTFNGPKSSQEAGIGIIHQELNLIPQLTIAENIFLGREFVNRFGKIDWKKMYAEADQLLAKLNLRFKSDKLVGELSIGDQQMVEIAKVLSFESKVIIMDEPTDALTDTETESLFRVIRELKSQRRGIVYISHRMKEIFEICDDVTVFRDGQFIAEREVATLTEDSLIEMMVGRKLEDQYPHLDNAPGEIRLKVDNLCGPGVNDVSFVLRKGEILGISGLMGAGRTELMKVLYGAMPRTSGYVTLDGHEVVTRSPQDGLANGIVYISEDRKRDGLVLGMSVKENMSLTALDYFSRAGGSLKHKDEQQAVGDFIRLFNVKTPSMEQAIGLLSGGNQQKVAIARGLMTRPKVLILDEPTRGVDVGAKKEIYQLINQFKADGLSIILVSSEMPEVLGMSDRIIVMHEGHLSGEFTREQATQEVLMAAAVGKLNRVNQE</sequence>
<accession>Q5PJX5</accession>
<organism>
    <name type="scientific">Salmonella paratyphi A (strain ATCC 9150 / SARB42)</name>
    <dbReference type="NCBI Taxonomy" id="295319"/>
    <lineage>
        <taxon>Bacteria</taxon>
        <taxon>Pseudomonadati</taxon>
        <taxon>Pseudomonadota</taxon>
        <taxon>Gammaproteobacteria</taxon>
        <taxon>Enterobacterales</taxon>
        <taxon>Enterobacteriaceae</taxon>
        <taxon>Salmonella</taxon>
    </lineage>
</organism>
<gene>
    <name evidence="1" type="primary">rbsA</name>
    <name type="ordered locus">SPA3721</name>
</gene>
<reference key="1">
    <citation type="journal article" date="2004" name="Nat. Genet.">
        <title>Comparison of genome degradation in Paratyphi A and Typhi, human-restricted serovars of Salmonella enterica that cause typhoid.</title>
        <authorList>
            <person name="McClelland M."/>
            <person name="Sanderson K.E."/>
            <person name="Clifton S.W."/>
            <person name="Latreille P."/>
            <person name="Porwollik S."/>
            <person name="Sabo A."/>
            <person name="Meyer R."/>
            <person name="Bieri T."/>
            <person name="Ozersky P."/>
            <person name="McLellan M."/>
            <person name="Harkins C.R."/>
            <person name="Wang C."/>
            <person name="Nguyen C."/>
            <person name="Berghoff A."/>
            <person name="Elliott G."/>
            <person name="Kohlberg S."/>
            <person name="Strong C."/>
            <person name="Du F."/>
            <person name="Carter J."/>
            <person name="Kremizki C."/>
            <person name="Layman D."/>
            <person name="Leonard S."/>
            <person name="Sun H."/>
            <person name="Fulton L."/>
            <person name="Nash W."/>
            <person name="Miner T."/>
            <person name="Minx P."/>
            <person name="Delehaunty K."/>
            <person name="Fronick C."/>
            <person name="Magrini V."/>
            <person name="Nhan M."/>
            <person name="Warren W."/>
            <person name="Florea L."/>
            <person name="Spieth J."/>
            <person name="Wilson R.K."/>
        </authorList>
    </citation>
    <scope>NUCLEOTIDE SEQUENCE [LARGE SCALE GENOMIC DNA]</scope>
    <source>
        <strain>ATCC 9150 / SARB42</strain>
    </source>
</reference>